<comment type="function">
    <text evidence="1">Probably acts as a transcriptional activator. Binds to the GCC-box pathogenesis-related promoter element. May be involved in the regulation of gene expression by stress factors and by components of stress signal transduction pathways (By similarity).</text>
</comment>
<comment type="subcellular location">
    <subcellularLocation>
        <location evidence="4">Nucleus</location>
    </subcellularLocation>
</comment>
<comment type="similarity">
    <text evidence="4">Belongs to the AP2/ERF transcription factor family. ERF subfamily.</text>
</comment>
<dbReference type="EMBL" id="AY560866">
    <property type="protein sequence ID" value="AAT44933.1"/>
    <property type="molecule type" value="mRNA"/>
</dbReference>
<dbReference type="EMBL" id="AC140977">
    <property type="protein sequence ID" value="AAO73898.1"/>
    <property type="molecule type" value="Genomic_DNA"/>
</dbReference>
<dbReference type="EMBL" id="AL589883">
    <property type="protein sequence ID" value="CAC34489.1"/>
    <property type="molecule type" value="Genomic_DNA"/>
</dbReference>
<dbReference type="EMBL" id="CP002688">
    <property type="protein sequence ID" value="AED92961.1"/>
    <property type="molecule type" value="Genomic_DNA"/>
</dbReference>
<dbReference type="EMBL" id="BT011577">
    <property type="protein sequence ID" value="AAS46630.1"/>
    <property type="molecule type" value="mRNA"/>
</dbReference>
<dbReference type="EMBL" id="BT012243">
    <property type="protein sequence ID" value="AAS76730.1"/>
    <property type="molecule type" value="mRNA"/>
</dbReference>
<dbReference type="RefSeq" id="NP_680184.1">
    <property type="nucleotide sequence ID" value="NM_147879.3"/>
</dbReference>
<dbReference type="SMR" id="Q9C591"/>
<dbReference type="BioGRID" id="17531">
    <property type="interactions" value="2"/>
</dbReference>
<dbReference type="FunCoup" id="Q9C591">
    <property type="interactions" value="2"/>
</dbReference>
<dbReference type="STRING" id="3702.Q9C591"/>
<dbReference type="PaxDb" id="3702-AT5G21960.1"/>
<dbReference type="EnsemblPlants" id="AT5G21960.1">
    <property type="protein sequence ID" value="AT5G21960.1"/>
    <property type="gene ID" value="AT5G21960"/>
</dbReference>
<dbReference type="GeneID" id="832256"/>
<dbReference type="Gramene" id="AT5G21960.1">
    <property type="protein sequence ID" value="AT5G21960.1"/>
    <property type="gene ID" value="AT5G21960"/>
</dbReference>
<dbReference type="KEGG" id="ath:AT5G21960"/>
<dbReference type="Araport" id="AT5G21960"/>
<dbReference type="TAIR" id="AT5G21960"/>
<dbReference type="eggNOG" id="ENOG502RZQP">
    <property type="taxonomic scope" value="Eukaryota"/>
</dbReference>
<dbReference type="HOGENOM" id="CLU_063331_2_1_1"/>
<dbReference type="InParanoid" id="Q9C591"/>
<dbReference type="OMA" id="SRFACEE"/>
<dbReference type="OrthoDB" id="1918918at2759"/>
<dbReference type="PhylomeDB" id="Q9C591"/>
<dbReference type="PRO" id="PR:Q9C591"/>
<dbReference type="Proteomes" id="UP000006548">
    <property type="component" value="Chromosome 5"/>
</dbReference>
<dbReference type="ExpressionAtlas" id="Q9C591">
    <property type="expression patterns" value="baseline and differential"/>
</dbReference>
<dbReference type="GO" id="GO:0005634">
    <property type="term" value="C:nucleus"/>
    <property type="evidence" value="ECO:0007005"/>
    <property type="project" value="TAIR"/>
</dbReference>
<dbReference type="GO" id="GO:0003677">
    <property type="term" value="F:DNA binding"/>
    <property type="evidence" value="ECO:0007669"/>
    <property type="project" value="UniProtKB-KW"/>
</dbReference>
<dbReference type="GO" id="GO:0003700">
    <property type="term" value="F:DNA-binding transcription factor activity"/>
    <property type="evidence" value="ECO:0007669"/>
    <property type="project" value="InterPro"/>
</dbReference>
<dbReference type="GO" id="GO:0009873">
    <property type="term" value="P:ethylene-activated signaling pathway"/>
    <property type="evidence" value="ECO:0007669"/>
    <property type="project" value="UniProtKB-KW"/>
</dbReference>
<dbReference type="CDD" id="cd00018">
    <property type="entry name" value="AP2"/>
    <property type="match status" value="1"/>
</dbReference>
<dbReference type="FunFam" id="3.30.730.10:FF:000001">
    <property type="entry name" value="Ethylene-responsive transcription factor 2"/>
    <property type="match status" value="1"/>
</dbReference>
<dbReference type="Gene3D" id="3.30.730.10">
    <property type="entry name" value="AP2/ERF domain"/>
    <property type="match status" value="1"/>
</dbReference>
<dbReference type="InterPro" id="IPR001471">
    <property type="entry name" value="AP2/ERF_dom"/>
</dbReference>
<dbReference type="InterPro" id="IPR036955">
    <property type="entry name" value="AP2/ERF_dom_sf"/>
</dbReference>
<dbReference type="InterPro" id="IPR051032">
    <property type="entry name" value="AP2/ERF_TF_ERF_subfamily"/>
</dbReference>
<dbReference type="InterPro" id="IPR016177">
    <property type="entry name" value="DNA-bd_dom_sf"/>
</dbReference>
<dbReference type="PANTHER" id="PTHR31985:SF287">
    <property type="entry name" value="ETHYLENE-RESPONSIVE TRANSCRIPTION FACTOR ERF016"/>
    <property type="match status" value="1"/>
</dbReference>
<dbReference type="PANTHER" id="PTHR31985">
    <property type="entry name" value="ETHYLENE-RESPONSIVE TRANSCRIPTION FACTOR ERF042-RELATED"/>
    <property type="match status" value="1"/>
</dbReference>
<dbReference type="Pfam" id="PF00847">
    <property type="entry name" value="AP2"/>
    <property type="match status" value="1"/>
</dbReference>
<dbReference type="PRINTS" id="PR00367">
    <property type="entry name" value="ETHRSPELEMNT"/>
</dbReference>
<dbReference type="SMART" id="SM00380">
    <property type="entry name" value="AP2"/>
    <property type="match status" value="1"/>
</dbReference>
<dbReference type="SUPFAM" id="SSF54171">
    <property type="entry name" value="DNA-binding domain"/>
    <property type="match status" value="1"/>
</dbReference>
<dbReference type="PROSITE" id="PS51032">
    <property type="entry name" value="AP2_ERF"/>
    <property type="match status" value="1"/>
</dbReference>
<accession>Q9C591</accession>
<reference key="1">
    <citation type="submission" date="2004-02" db="EMBL/GenBank/DDBJ databases">
        <title>Molecular cloning, expression, phylogenetic and functional characterization of the Arabidopsis AP2/EREBP transcription factor family.</title>
        <authorList>
            <person name="Pan Y."/>
            <person name="Gong W."/>
            <person name="Liu D."/>
            <person name="Fu Q."/>
            <person name="Mei W.-Q."/>
            <person name="Song W.-Q."/>
            <person name="Ma L.-G."/>
            <person name="Luo J.-C."/>
            <person name="Deng X.-W."/>
            <person name="Zhu Y.-X."/>
        </authorList>
    </citation>
    <scope>NUCLEOTIDE SEQUENCE [MRNA]</scope>
</reference>
<reference key="2">
    <citation type="journal article" date="2000" name="Nature">
        <title>Sequence and analysis of chromosome 5 of the plant Arabidopsis thaliana.</title>
        <authorList>
            <person name="Tabata S."/>
            <person name="Kaneko T."/>
            <person name="Nakamura Y."/>
            <person name="Kotani H."/>
            <person name="Kato T."/>
            <person name="Asamizu E."/>
            <person name="Miyajima N."/>
            <person name="Sasamoto S."/>
            <person name="Kimura T."/>
            <person name="Hosouchi T."/>
            <person name="Kawashima K."/>
            <person name="Kohara M."/>
            <person name="Matsumoto M."/>
            <person name="Matsuno A."/>
            <person name="Muraki A."/>
            <person name="Nakayama S."/>
            <person name="Nakazaki N."/>
            <person name="Naruo K."/>
            <person name="Okumura S."/>
            <person name="Shinpo S."/>
            <person name="Takeuchi C."/>
            <person name="Wada T."/>
            <person name="Watanabe A."/>
            <person name="Yamada M."/>
            <person name="Yasuda M."/>
            <person name="Sato S."/>
            <person name="de la Bastide M."/>
            <person name="Huang E."/>
            <person name="Spiegel L."/>
            <person name="Gnoj L."/>
            <person name="O'Shaughnessy A."/>
            <person name="Preston R."/>
            <person name="Habermann K."/>
            <person name="Murray J."/>
            <person name="Johnson D."/>
            <person name="Rohlfing T."/>
            <person name="Nelson J."/>
            <person name="Stoneking T."/>
            <person name="Pepin K."/>
            <person name="Spieth J."/>
            <person name="Sekhon M."/>
            <person name="Armstrong J."/>
            <person name="Becker M."/>
            <person name="Belter E."/>
            <person name="Cordum H."/>
            <person name="Cordes M."/>
            <person name="Courtney L."/>
            <person name="Courtney W."/>
            <person name="Dante M."/>
            <person name="Du H."/>
            <person name="Edwards J."/>
            <person name="Fryman J."/>
            <person name="Haakensen B."/>
            <person name="Lamar E."/>
            <person name="Latreille P."/>
            <person name="Leonard S."/>
            <person name="Meyer R."/>
            <person name="Mulvaney E."/>
            <person name="Ozersky P."/>
            <person name="Riley A."/>
            <person name="Strowmatt C."/>
            <person name="Wagner-McPherson C."/>
            <person name="Wollam A."/>
            <person name="Yoakum M."/>
            <person name="Bell M."/>
            <person name="Dedhia N."/>
            <person name="Parnell L."/>
            <person name="Shah R."/>
            <person name="Rodriguez M."/>
            <person name="Hoon See L."/>
            <person name="Vil D."/>
            <person name="Baker J."/>
            <person name="Kirchoff K."/>
            <person name="Toth K."/>
            <person name="King L."/>
            <person name="Bahret A."/>
            <person name="Miller B."/>
            <person name="Marra M.A."/>
            <person name="Martienssen R."/>
            <person name="McCombie W.R."/>
            <person name="Wilson R.K."/>
            <person name="Murphy G."/>
            <person name="Bancroft I."/>
            <person name="Volckaert G."/>
            <person name="Wambutt R."/>
            <person name="Duesterhoeft A."/>
            <person name="Stiekema W."/>
            <person name="Pohl T."/>
            <person name="Entian K.-D."/>
            <person name="Terryn N."/>
            <person name="Hartley N."/>
            <person name="Bent E."/>
            <person name="Johnson S."/>
            <person name="Langham S.-A."/>
            <person name="McCullagh B."/>
            <person name="Robben J."/>
            <person name="Grymonprez B."/>
            <person name="Zimmermann W."/>
            <person name="Ramsperger U."/>
            <person name="Wedler H."/>
            <person name="Balke K."/>
            <person name="Wedler E."/>
            <person name="Peters S."/>
            <person name="van Staveren M."/>
            <person name="Dirkse W."/>
            <person name="Mooijman P."/>
            <person name="Klein Lankhorst R."/>
            <person name="Weitzenegger T."/>
            <person name="Bothe G."/>
            <person name="Rose M."/>
            <person name="Hauf J."/>
            <person name="Berneiser S."/>
            <person name="Hempel S."/>
            <person name="Feldpausch M."/>
            <person name="Lamberth S."/>
            <person name="Villarroel R."/>
            <person name="Gielen J."/>
            <person name="Ardiles W."/>
            <person name="Bents O."/>
            <person name="Lemcke K."/>
            <person name="Kolesov G."/>
            <person name="Mayer K.F.X."/>
            <person name="Rudd S."/>
            <person name="Schoof H."/>
            <person name="Schueller C."/>
            <person name="Zaccaria P."/>
            <person name="Mewes H.-W."/>
            <person name="Bevan M."/>
            <person name="Fransz P.F."/>
        </authorList>
    </citation>
    <scope>NUCLEOTIDE SEQUENCE [LARGE SCALE GENOMIC DNA]</scope>
    <source>
        <strain>cv. Columbia</strain>
    </source>
</reference>
<reference key="3">
    <citation type="journal article" date="2017" name="Plant J.">
        <title>Araport11: a complete reannotation of the Arabidopsis thaliana reference genome.</title>
        <authorList>
            <person name="Cheng C.Y."/>
            <person name="Krishnakumar V."/>
            <person name="Chan A.P."/>
            <person name="Thibaud-Nissen F."/>
            <person name="Schobel S."/>
            <person name="Town C.D."/>
        </authorList>
    </citation>
    <scope>GENOME REANNOTATION</scope>
    <source>
        <strain>cv. Columbia</strain>
    </source>
</reference>
<reference key="4">
    <citation type="submission" date="2004-03" db="EMBL/GenBank/DDBJ databases">
        <authorList>
            <person name="Cheuk R.F."/>
            <person name="Chen H."/>
            <person name="Kim C.J."/>
            <person name="Shinn P."/>
            <person name="Ecker J.R."/>
        </authorList>
    </citation>
    <scope>NUCLEOTIDE SEQUENCE [LARGE SCALE MRNA]</scope>
    <source>
        <strain>cv. Columbia</strain>
    </source>
</reference>
<reference key="5">
    <citation type="journal article" date="2006" name="Plant Physiol.">
        <title>Genome-wide analysis of the ERF gene family in Arabidopsis and rice.</title>
        <authorList>
            <person name="Nakano T."/>
            <person name="Suzuki K."/>
            <person name="Fujimura T."/>
            <person name="Shinshi H."/>
        </authorList>
    </citation>
    <scope>GENE FAMILY</scope>
    <scope>NOMENCLATURE</scope>
</reference>
<organism>
    <name type="scientific">Arabidopsis thaliana</name>
    <name type="common">Mouse-ear cress</name>
    <dbReference type="NCBI Taxonomy" id="3702"/>
    <lineage>
        <taxon>Eukaryota</taxon>
        <taxon>Viridiplantae</taxon>
        <taxon>Streptophyta</taxon>
        <taxon>Embryophyta</taxon>
        <taxon>Tracheophyta</taxon>
        <taxon>Spermatophyta</taxon>
        <taxon>Magnoliopsida</taxon>
        <taxon>eudicotyledons</taxon>
        <taxon>Gunneridae</taxon>
        <taxon>Pentapetalae</taxon>
        <taxon>rosids</taxon>
        <taxon>malvids</taxon>
        <taxon>Brassicales</taxon>
        <taxon>Brassicaceae</taxon>
        <taxon>Camelineae</taxon>
        <taxon>Arabidopsis</taxon>
    </lineage>
</organism>
<protein>
    <recommendedName>
        <fullName>Ethylene-responsive transcription factor ERF016</fullName>
    </recommendedName>
</protein>
<name>ERF16_ARATH</name>
<evidence type="ECO:0000250" key="1"/>
<evidence type="ECO:0000255" key="2">
    <source>
        <dbReference type="PROSITE-ProRule" id="PRU00366"/>
    </source>
</evidence>
<evidence type="ECO:0000256" key="3">
    <source>
        <dbReference type="SAM" id="MobiDB-lite"/>
    </source>
</evidence>
<evidence type="ECO:0000305" key="4"/>
<sequence>MDASPKYTGVRKRKWGKWVAEIRLPNSRDRIWLGSFDSAEKAARAFDAALYCLRGPGARFNFPDNPPEIPGGRSLTPQQIQVVASRFACEEELLPPEQHHPSPPRGDHNTEEEVIISARGEINSGSGGPTLGQVGEDNNNEGNSNDTSSYWPLIWEEENFVGPPNSDHEFGFFTDDSTNLYFPTQQQQQHQLSSDFYYDGACEDDFSHYNINLWNF</sequence>
<proteinExistence type="evidence at transcript level"/>
<feature type="chain" id="PRO_0000290376" description="Ethylene-responsive transcription factor ERF016">
    <location>
        <begin position="1"/>
        <end position="216"/>
    </location>
</feature>
<feature type="DNA-binding region" description="AP2/ERF" evidence="2">
    <location>
        <begin position="6"/>
        <end position="63"/>
    </location>
</feature>
<feature type="region of interest" description="Disordered" evidence="3">
    <location>
        <begin position="121"/>
        <end position="145"/>
    </location>
</feature>
<feature type="compositionally biased region" description="Low complexity" evidence="3">
    <location>
        <begin position="135"/>
        <end position="145"/>
    </location>
</feature>
<gene>
    <name type="primary">ERF016</name>
    <name type="ordered locus">At5g21960</name>
    <name type="ORF">T6G21.22</name>
</gene>
<keyword id="KW-0010">Activator</keyword>
<keyword id="KW-0238">DNA-binding</keyword>
<keyword id="KW-0936">Ethylene signaling pathway</keyword>
<keyword id="KW-0539">Nucleus</keyword>
<keyword id="KW-1185">Reference proteome</keyword>
<keyword id="KW-0804">Transcription</keyword>
<keyword id="KW-0805">Transcription regulation</keyword>